<organism>
    <name type="scientific">Rattus norvegicus</name>
    <name type="common">Rat</name>
    <dbReference type="NCBI Taxonomy" id="10116"/>
    <lineage>
        <taxon>Eukaryota</taxon>
        <taxon>Metazoa</taxon>
        <taxon>Chordata</taxon>
        <taxon>Craniata</taxon>
        <taxon>Vertebrata</taxon>
        <taxon>Euteleostomi</taxon>
        <taxon>Mammalia</taxon>
        <taxon>Eutheria</taxon>
        <taxon>Euarchontoglires</taxon>
        <taxon>Glires</taxon>
        <taxon>Rodentia</taxon>
        <taxon>Myomorpha</taxon>
        <taxon>Muroidea</taxon>
        <taxon>Muridae</taxon>
        <taxon>Murinae</taxon>
        <taxon>Rattus</taxon>
    </lineage>
</organism>
<name>PTER_RAT</name>
<sequence length="349" mass="39145">MSSLSGKVQTVLGPVEPSQLGRTLTHEHLTMAFDSFYCPPPPCQEAASREPIMMKNLFWIQKNPYSHQENLQLNQEVEAVREELLYFKAKGGGAVVENTTTGLSRDVRTLKWLAEQTGVHIIAGAGFYVDATHSAATRAMSVEQLTDVLISEILHGADGTSIKCGVIGEIGCSWPLTDSERKVLQATAHAQAQLGCPVIIHPGRNPGAPFQIIRVLQEAGADISKTVMSHLDRSIFDKKELLEFAQLGCYLEYDLFGTELLNYQLSPDIDMPDDNKRIRRVRFLVNEGYEDRILMAHDIHTKHRLMKYGGHGYSHILTNVVPKMLLRGLTERVLDKILRENPKQWLTFK</sequence>
<proteinExistence type="evidence at transcript level"/>
<protein>
    <recommendedName>
        <fullName evidence="6">N-acetyltaurine hydrolase</fullName>
        <ecNumber evidence="2">3.1.-.-</ecNumber>
    </recommendedName>
    <alternativeName>
        <fullName evidence="2">Phosphotriesterase-related protein</fullName>
    </alternativeName>
    <alternativeName>
        <fullName evidence="5">Resiniferotoxin-binding phosphotriesterase-related protein</fullName>
    </alternativeName>
</protein>
<evidence type="ECO:0000250" key="1">
    <source>
        <dbReference type="UniProtKB" id="P45548"/>
    </source>
</evidence>
<evidence type="ECO:0000250" key="2">
    <source>
        <dbReference type="UniProtKB" id="Q60866"/>
    </source>
</evidence>
<evidence type="ECO:0000255" key="3">
    <source>
        <dbReference type="PROSITE-ProRule" id="PRU00679"/>
    </source>
</evidence>
<evidence type="ECO:0000269" key="4">
    <source>
    </source>
</evidence>
<evidence type="ECO:0000303" key="5">
    <source>
    </source>
</evidence>
<evidence type="ECO:0000305" key="6"/>
<evidence type="ECO:0000312" key="7">
    <source>
        <dbReference type="RGD" id="61313"/>
    </source>
</evidence>
<keyword id="KW-0963">Cytoplasm</keyword>
<keyword id="KW-0378">Hydrolase</keyword>
<keyword id="KW-0479">Metal-binding</keyword>
<keyword id="KW-1185">Reference proteome</keyword>
<comment type="function">
    <text evidence="2 4">N-acetyltaurine hydrolase that regulates feeding by catalyzing the hydrolysis of N-acetyltaurine into taurine and acetate (By similarity). N-acetyltaurine has anorexigenic and anti-obesity effects that are dependent on GFRAL receptor and GDF15 (By similarity). PTER also acts on other N-acetyl amino acids (Met, Ile, Leu, Val) and N-propionyltaurine, but at lower rates (By similarity). Binds resiniferotoxin, a vanilloid that desensitizes nociceptive neurons (PubMed:9237666).</text>
</comment>
<comment type="catalytic activity">
    <reaction evidence="2">
        <text>N-acetyltaurine + H2O = taurine + acetate</text>
        <dbReference type="Rhea" id="RHEA:81107"/>
        <dbReference type="ChEBI" id="CHEBI:15377"/>
        <dbReference type="ChEBI" id="CHEBI:30089"/>
        <dbReference type="ChEBI" id="CHEBI:133737"/>
        <dbReference type="ChEBI" id="CHEBI:507393"/>
    </reaction>
    <physiologicalReaction direction="left-to-right" evidence="2">
        <dbReference type="Rhea" id="RHEA:81108"/>
    </physiologicalReaction>
</comment>
<comment type="catalytic activity">
    <reaction evidence="2">
        <text>N-propanoyltaurine + H2O = propanoate + taurine</text>
        <dbReference type="Rhea" id="RHEA:81111"/>
        <dbReference type="ChEBI" id="CHEBI:15377"/>
        <dbReference type="ChEBI" id="CHEBI:17272"/>
        <dbReference type="ChEBI" id="CHEBI:231795"/>
        <dbReference type="ChEBI" id="CHEBI:507393"/>
    </reaction>
    <physiologicalReaction direction="left-to-right" evidence="2">
        <dbReference type="Rhea" id="RHEA:81112"/>
    </physiologicalReaction>
</comment>
<comment type="catalytic activity">
    <reaction evidence="2">
        <text>N-acetyl-L-methionine + H2O = L-methionine + acetate</text>
        <dbReference type="Rhea" id="RHEA:67440"/>
        <dbReference type="ChEBI" id="CHEBI:15377"/>
        <dbReference type="ChEBI" id="CHEBI:30089"/>
        <dbReference type="ChEBI" id="CHEBI:57844"/>
        <dbReference type="ChEBI" id="CHEBI:71670"/>
    </reaction>
    <physiologicalReaction direction="left-to-right" evidence="2">
        <dbReference type="Rhea" id="RHEA:67441"/>
    </physiologicalReaction>
</comment>
<comment type="catalytic activity">
    <reaction evidence="2">
        <text>N-acetyl-L-isoleucine + H2O = L-isoleucine + acetate</text>
        <dbReference type="Rhea" id="RHEA:81119"/>
        <dbReference type="ChEBI" id="CHEBI:15377"/>
        <dbReference type="ChEBI" id="CHEBI:30089"/>
        <dbReference type="ChEBI" id="CHEBI:58045"/>
        <dbReference type="ChEBI" id="CHEBI:133735"/>
    </reaction>
    <physiologicalReaction direction="left-to-right" evidence="2">
        <dbReference type="Rhea" id="RHEA:81120"/>
    </physiologicalReaction>
</comment>
<comment type="catalytic activity">
    <reaction evidence="2">
        <text>N-acetyl-L-leucine + H2O = L-leucine + acetate</text>
        <dbReference type="Rhea" id="RHEA:81115"/>
        <dbReference type="ChEBI" id="CHEBI:15377"/>
        <dbReference type="ChEBI" id="CHEBI:30089"/>
        <dbReference type="ChEBI" id="CHEBI:57427"/>
        <dbReference type="ChEBI" id="CHEBI:58270"/>
    </reaction>
    <physiologicalReaction direction="left-to-right" evidence="2">
        <dbReference type="Rhea" id="RHEA:81116"/>
    </physiologicalReaction>
</comment>
<comment type="catalytic activity">
    <reaction evidence="2">
        <text>N-acetyl-L-valine + H2O = L-valine + acetate</text>
        <dbReference type="Rhea" id="RHEA:81123"/>
        <dbReference type="ChEBI" id="CHEBI:15377"/>
        <dbReference type="ChEBI" id="CHEBI:30089"/>
        <dbReference type="ChEBI" id="CHEBI:57762"/>
        <dbReference type="ChEBI" id="CHEBI:133716"/>
    </reaction>
    <physiologicalReaction direction="left-to-right" evidence="2">
        <dbReference type="Rhea" id="RHEA:81124"/>
    </physiologicalReaction>
</comment>
<comment type="cofactor">
    <cofactor evidence="1">
        <name>a divalent metal cation</name>
        <dbReference type="ChEBI" id="CHEBI:60240"/>
    </cofactor>
    <text evidence="1">Binds 2 divalent metal cations per subunit.</text>
</comment>
<comment type="subcellular location">
    <subcellularLocation>
        <location evidence="2">Cytoplasm</location>
        <location evidence="2">Cytosol</location>
    </subcellularLocation>
</comment>
<comment type="tissue specificity">
    <text evidence="4">Expressed primarily in proximal tubules of the kidney.</text>
</comment>
<comment type="similarity">
    <text evidence="3">Belongs to the metallo-dependent hydrolases superfamily. Phosphotriesterase family.</text>
</comment>
<accession>Q63530</accession>
<accession>Q6AYY7</accession>
<gene>
    <name evidence="7" type="primary">Pter</name>
    <name evidence="5" type="synonym">Rpr-1</name>
</gene>
<reference key="1">
    <citation type="journal article" date="1997" name="FEBS Lett.">
        <title>Molecular cloning and expression pattern of rpr-1, a resiniferatoxin-binding, phosphotriesterase-related protein, expressed in rat kidney tubules.</title>
        <authorList>
            <person name="Davies J.A."/>
            <person name="Buchman V."/>
            <person name="Krylova O."/>
            <person name="Ninkina N.N."/>
        </authorList>
    </citation>
    <scope>NUCLEOTIDE SEQUENCE [GENOMIC DNA]</scope>
    <scope>FUNCTION</scope>
    <scope>TISSUE SPECIFICITY</scope>
</reference>
<reference key="2">
    <citation type="journal article" date="2004" name="Genome Res.">
        <title>The status, quality, and expansion of the NIH full-length cDNA project: the Mammalian Gene Collection (MGC).</title>
        <authorList>
            <consortium name="The MGC Project Team"/>
        </authorList>
    </citation>
    <scope>NUCLEOTIDE SEQUENCE [LARGE SCALE MRNA]</scope>
    <source>
        <tissue>Kidney</tissue>
    </source>
</reference>
<feature type="chain" id="PRO_0000205366" description="N-acetyltaurine hydrolase">
    <location>
        <begin position="1"/>
        <end position="349"/>
    </location>
</feature>
<feature type="binding site" evidence="1">
    <location>
        <position position="26"/>
    </location>
    <ligand>
        <name>a divalent metal cation</name>
        <dbReference type="ChEBI" id="CHEBI:60240"/>
        <label>1</label>
    </ligand>
</feature>
<feature type="binding site" evidence="1">
    <location>
        <position position="28"/>
    </location>
    <ligand>
        <name>a divalent metal cation</name>
        <dbReference type="ChEBI" id="CHEBI:60240"/>
        <label>1</label>
    </ligand>
</feature>
<feature type="binding site" evidence="1">
    <location>
        <position position="169"/>
    </location>
    <ligand>
        <name>a divalent metal cation</name>
        <dbReference type="ChEBI" id="CHEBI:60240"/>
        <label>1</label>
    </ligand>
</feature>
<feature type="binding site" evidence="1">
    <location>
        <position position="169"/>
    </location>
    <ligand>
        <name>a divalent metal cation</name>
        <dbReference type="ChEBI" id="CHEBI:60240"/>
        <label>2</label>
    </ligand>
</feature>
<feature type="binding site" evidence="1">
    <location>
        <position position="201"/>
    </location>
    <ligand>
        <name>a divalent metal cation</name>
        <dbReference type="ChEBI" id="CHEBI:60240"/>
        <label>2</label>
    </ligand>
</feature>
<feature type="binding site" evidence="1">
    <location>
        <position position="230"/>
    </location>
    <ligand>
        <name>a divalent metal cation</name>
        <dbReference type="ChEBI" id="CHEBI:60240"/>
        <label>2</label>
    </ligand>
</feature>
<feature type="binding site" evidence="1">
    <location>
        <position position="298"/>
    </location>
    <ligand>
        <name>a divalent metal cation</name>
        <dbReference type="ChEBI" id="CHEBI:60240"/>
        <label>1</label>
    </ligand>
</feature>
<feature type="sequence conflict" description="In Ref. 1; CAA67840." evidence="6" ref="1">
    <original>S</original>
    <variation>F</variation>
    <location>
        <position position="134"/>
    </location>
</feature>
<feature type="sequence conflict" description="In Ref. 1; CAA67840." evidence="6" ref="1">
    <original>M</original>
    <variation>L</variation>
    <location>
        <position position="271"/>
    </location>
</feature>
<feature type="sequence conflict" description="In Ref. 1; CAA67840." evidence="6" ref="1">
    <original>RIRR</original>
    <variation>GLGG</variation>
    <location>
        <begin position="277"/>
        <end position="280"/>
    </location>
</feature>
<feature type="sequence conflict" description="In Ref. 1; CAA67840." evidence="6" ref="1">
    <original>G</original>
    <variation>V</variation>
    <location>
        <position position="310"/>
    </location>
</feature>
<dbReference type="EC" id="3.1.-.-" evidence="2"/>
<dbReference type="EMBL" id="X99477">
    <property type="protein sequence ID" value="CAA67840.1"/>
    <property type="molecule type" value="Genomic_DNA"/>
</dbReference>
<dbReference type="EMBL" id="BC078833">
    <property type="protein sequence ID" value="AAH78833.1"/>
    <property type="molecule type" value="mRNA"/>
</dbReference>
<dbReference type="RefSeq" id="NP_071560.2">
    <property type="nucleotide sequence ID" value="NM_022224.2"/>
</dbReference>
<dbReference type="RefSeq" id="XP_006254353.1">
    <property type="nucleotide sequence ID" value="XM_006254291.5"/>
</dbReference>
<dbReference type="SMR" id="Q63530"/>
<dbReference type="FunCoup" id="Q63530">
    <property type="interactions" value="130"/>
</dbReference>
<dbReference type="STRING" id="10116.ENSRNOP00000023446"/>
<dbReference type="iPTMnet" id="Q63530"/>
<dbReference type="PhosphoSitePlus" id="Q63530"/>
<dbReference type="PaxDb" id="10116-ENSRNOP00000023446"/>
<dbReference type="Ensembl" id="ENSRNOT00000023446.5">
    <property type="protein sequence ID" value="ENSRNOP00000023446.2"/>
    <property type="gene ID" value="ENSRNOG00000017328.5"/>
</dbReference>
<dbReference type="GeneID" id="63852"/>
<dbReference type="KEGG" id="rno:63852"/>
<dbReference type="AGR" id="RGD:61313"/>
<dbReference type="CTD" id="9317"/>
<dbReference type="RGD" id="61313">
    <property type="gene designation" value="Pter"/>
</dbReference>
<dbReference type="eggNOG" id="ENOG502QQQR">
    <property type="taxonomic scope" value="Eukaryota"/>
</dbReference>
<dbReference type="GeneTree" id="ENSGT00390000006960"/>
<dbReference type="HOGENOM" id="CLU_054760_0_1_1"/>
<dbReference type="InParanoid" id="Q63530"/>
<dbReference type="PhylomeDB" id="Q63530"/>
<dbReference type="TreeFam" id="TF323205"/>
<dbReference type="PRO" id="PR:Q63530"/>
<dbReference type="Proteomes" id="UP000002494">
    <property type="component" value="Chromosome 17"/>
</dbReference>
<dbReference type="Bgee" id="ENSRNOG00000017328">
    <property type="expression patterns" value="Expressed in kidney and 19 other cell types or tissues"/>
</dbReference>
<dbReference type="GO" id="GO:0005829">
    <property type="term" value="C:cytosol"/>
    <property type="evidence" value="ECO:0000250"/>
    <property type="project" value="UniProtKB"/>
</dbReference>
<dbReference type="GO" id="GO:0141215">
    <property type="term" value="F:N-acetyltaurine hydrolase activity"/>
    <property type="evidence" value="ECO:0000250"/>
    <property type="project" value="UniProtKB"/>
</dbReference>
<dbReference type="GO" id="GO:0008270">
    <property type="term" value="F:zinc ion binding"/>
    <property type="evidence" value="ECO:0007669"/>
    <property type="project" value="InterPro"/>
</dbReference>
<dbReference type="GO" id="GO:0009056">
    <property type="term" value="P:catabolic process"/>
    <property type="evidence" value="ECO:0007669"/>
    <property type="project" value="InterPro"/>
</dbReference>
<dbReference type="GO" id="GO:0030855">
    <property type="term" value="P:epithelial cell differentiation"/>
    <property type="evidence" value="ECO:0000266"/>
    <property type="project" value="RGD"/>
</dbReference>
<dbReference type="GO" id="GO:0032098">
    <property type="term" value="P:regulation of appetite"/>
    <property type="evidence" value="ECO:0000250"/>
    <property type="project" value="UniProtKB"/>
</dbReference>
<dbReference type="GO" id="GO:0019530">
    <property type="term" value="P:taurine metabolic process"/>
    <property type="evidence" value="ECO:0000250"/>
    <property type="project" value="UniProtKB"/>
</dbReference>
<dbReference type="CDD" id="cd00530">
    <property type="entry name" value="PTE"/>
    <property type="match status" value="1"/>
</dbReference>
<dbReference type="Gene3D" id="3.20.20.140">
    <property type="entry name" value="Metal-dependent hydrolases"/>
    <property type="match status" value="1"/>
</dbReference>
<dbReference type="InterPro" id="IPR017947">
    <property type="entry name" value="AryldialkylPase_Zn-BS"/>
</dbReference>
<dbReference type="InterPro" id="IPR032466">
    <property type="entry name" value="Metal_Hydrolase"/>
</dbReference>
<dbReference type="InterPro" id="IPR001559">
    <property type="entry name" value="Phosphotriesterase"/>
</dbReference>
<dbReference type="PANTHER" id="PTHR10819">
    <property type="entry name" value="PHOSPHOTRIESTERASE-RELATED"/>
    <property type="match status" value="1"/>
</dbReference>
<dbReference type="PANTHER" id="PTHR10819:SF3">
    <property type="entry name" value="PHOSPHOTRIESTERASE-RELATED PROTEIN"/>
    <property type="match status" value="1"/>
</dbReference>
<dbReference type="Pfam" id="PF02126">
    <property type="entry name" value="PTE"/>
    <property type="match status" value="1"/>
</dbReference>
<dbReference type="PIRSF" id="PIRSF016839">
    <property type="entry name" value="PhP"/>
    <property type="match status" value="1"/>
</dbReference>
<dbReference type="SUPFAM" id="SSF51556">
    <property type="entry name" value="Metallo-dependent hydrolases"/>
    <property type="match status" value="1"/>
</dbReference>
<dbReference type="PROSITE" id="PS01322">
    <property type="entry name" value="PHOSPHOTRIESTERASE_1"/>
    <property type="match status" value="1"/>
</dbReference>
<dbReference type="PROSITE" id="PS51347">
    <property type="entry name" value="PHOSPHOTRIESTERASE_2"/>
    <property type="match status" value="1"/>
</dbReference>